<keyword id="KW-0963">Cytoplasm</keyword>
<keyword id="KW-0255">Endonuclease</keyword>
<keyword id="KW-0378">Hydrolase</keyword>
<keyword id="KW-0464">Manganese</keyword>
<keyword id="KW-0479">Metal-binding</keyword>
<keyword id="KW-0540">Nuclease</keyword>
<keyword id="KW-1185">Reference proteome</keyword>
<protein>
    <recommendedName>
        <fullName evidence="1">Ribonuclease HII</fullName>
        <shortName evidence="1">RNase HII</shortName>
        <ecNumber evidence="1">3.1.26.4</ecNumber>
    </recommendedName>
</protein>
<feature type="chain" id="PRO_0000111620" description="Ribonuclease HII">
    <location>
        <begin position="1"/>
        <end position="198"/>
    </location>
</feature>
<feature type="domain" description="RNase H type-2" evidence="2">
    <location>
        <begin position="10"/>
        <end position="198"/>
    </location>
</feature>
<feature type="binding site" evidence="1">
    <location>
        <position position="16"/>
    </location>
    <ligand>
        <name>a divalent metal cation</name>
        <dbReference type="ChEBI" id="CHEBI:60240"/>
    </ligand>
</feature>
<feature type="binding site" evidence="1">
    <location>
        <position position="17"/>
    </location>
    <ligand>
        <name>a divalent metal cation</name>
        <dbReference type="ChEBI" id="CHEBI:60240"/>
    </ligand>
</feature>
<feature type="binding site" evidence="1">
    <location>
        <position position="108"/>
    </location>
    <ligand>
        <name>a divalent metal cation</name>
        <dbReference type="ChEBI" id="CHEBI:60240"/>
    </ligand>
</feature>
<reference key="1">
    <citation type="journal article" date="2002" name="Nucleic Acids Res.">
        <title>Genome sequence of Shigella flexneri 2a: insights into pathogenicity through comparison with genomes of Escherichia coli K12 and O157.</title>
        <authorList>
            <person name="Jin Q."/>
            <person name="Yuan Z."/>
            <person name="Xu J."/>
            <person name="Wang Y."/>
            <person name="Shen Y."/>
            <person name="Lu W."/>
            <person name="Wang J."/>
            <person name="Liu H."/>
            <person name="Yang J."/>
            <person name="Yang F."/>
            <person name="Zhang X."/>
            <person name="Zhang J."/>
            <person name="Yang G."/>
            <person name="Wu H."/>
            <person name="Qu D."/>
            <person name="Dong J."/>
            <person name="Sun L."/>
            <person name="Xue Y."/>
            <person name="Zhao A."/>
            <person name="Gao Y."/>
            <person name="Zhu J."/>
            <person name="Kan B."/>
            <person name="Ding K."/>
            <person name="Chen S."/>
            <person name="Cheng H."/>
            <person name="Yao Z."/>
            <person name="He B."/>
            <person name="Chen R."/>
            <person name="Ma D."/>
            <person name="Qiang B."/>
            <person name="Wen Y."/>
            <person name="Hou Y."/>
            <person name="Yu J."/>
        </authorList>
    </citation>
    <scope>NUCLEOTIDE SEQUENCE [LARGE SCALE GENOMIC DNA]</scope>
    <source>
        <strain>301 / Serotype 2a</strain>
    </source>
</reference>
<reference key="2">
    <citation type="journal article" date="2003" name="Infect. Immun.">
        <title>Complete genome sequence and comparative genomics of Shigella flexneri serotype 2a strain 2457T.</title>
        <authorList>
            <person name="Wei J."/>
            <person name="Goldberg M.B."/>
            <person name="Burland V."/>
            <person name="Venkatesan M.M."/>
            <person name="Deng W."/>
            <person name="Fournier G."/>
            <person name="Mayhew G.F."/>
            <person name="Plunkett G. III"/>
            <person name="Rose D.J."/>
            <person name="Darling A."/>
            <person name="Mau B."/>
            <person name="Perna N.T."/>
            <person name="Payne S.M."/>
            <person name="Runyen-Janecky L.J."/>
            <person name="Zhou S."/>
            <person name="Schwartz D.C."/>
            <person name="Blattner F.R."/>
        </authorList>
    </citation>
    <scope>NUCLEOTIDE SEQUENCE [LARGE SCALE GENOMIC DNA]</scope>
    <source>
        <strain>ATCC 700930 / 2457T / Serotype 2a</strain>
    </source>
</reference>
<comment type="function">
    <text evidence="1">Endonuclease that specifically degrades the RNA of RNA-DNA hybrids.</text>
</comment>
<comment type="catalytic activity">
    <reaction evidence="1">
        <text>Endonucleolytic cleavage to 5'-phosphomonoester.</text>
        <dbReference type="EC" id="3.1.26.4"/>
    </reaction>
</comment>
<comment type="cofactor">
    <cofactor evidence="1">
        <name>Mn(2+)</name>
        <dbReference type="ChEBI" id="CHEBI:29035"/>
    </cofactor>
    <cofactor evidence="1">
        <name>Mg(2+)</name>
        <dbReference type="ChEBI" id="CHEBI:18420"/>
    </cofactor>
    <text evidence="1">Manganese or magnesium. Binds 1 divalent metal ion per monomer in the absence of substrate. May bind a second metal ion after substrate binding.</text>
</comment>
<comment type="subcellular location">
    <subcellularLocation>
        <location evidence="1">Cytoplasm</location>
    </subcellularLocation>
</comment>
<comment type="similarity">
    <text evidence="1">Belongs to the RNase HII family.</text>
</comment>
<name>RNH2_SHIFL</name>
<evidence type="ECO:0000255" key="1">
    <source>
        <dbReference type="HAMAP-Rule" id="MF_00052"/>
    </source>
</evidence>
<evidence type="ECO:0000255" key="2">
    <source>
        <dbReference type="PROSITE-ProRule" id="PRU01319"/>
    </source>
</evidence>
<accession>Q83MN1</accession>
<proteinExistence type="inferred from homology"/>
<gene>
    <name evidence="1" type="primary">rnhB</name>
    <name type="ordered locus">SF0173</name>
    <name type="ordered locus">S0176</name>
</gene>
<dbReference type="EC" id="3.1.26.4" evidence="1"/>
<dbReference type="EMBL" id="AE005674">
    <property type="protein sequence ID" value="AAN41835.1"/>
    <property type="molecule type" value="Genomic_DNA"/>
</dbReference>
<dbReference type="EMBL" id="AE014073">
    <property type="protein sequence ID" value="AAP15716.1"/>
    <property type="molecule type" value="Genomic_DNA"/>
</dbReference>
<dbReference type="RefSeq" id="NP_706128.1">
    <property type="nucleotide sequence ID" value="NC_004337.2"/>
</dbReference>
<dbReference type="RefSeq" id="WP_000569431.1">
    <property type="nucleotide sequence ID" value="NZ_WPGW01000006.1"/>
</dbReference>
<dbReference type="SMR" id="Q83MN1"/>
<dbReference type="STRING" id="198214.SF0173"/>
<dbReference type="PaxDb" id="198214-SF0173"/>
<dbReference type="GeneID" id="1024448"/>
<dbReference type="KEGG" id="sfl:SF0173"/>
<dbReference type="KEGG" id="sfx:S0176"/>
<dbReference type="PATRIC" id="fig|198214.7.peg.195"/>
<dbReference type="HOGENOM" id="CLU_036532_3_2_6"/>
<dbReference type="Proteomes" id="UP000001006">
    <property type="component" value="Chromosome"/>
</dbReference>
<dbReference type="Proteomes" id="UP000002673">
    <property type="component" value="Chromosome"/>
</dbReference>
<dbReference type="GO" id="GO:0005737">
    <property type="term" value="C:cytoplasm"/>
    <property type="evidence" value="ECO:0007669"/>
    <property type="project" value="UniProtKB-SubCell"/>
</dbReference>
<dbReference type="GO" id="GO:0032299">
    <property type="term" value="C:ribonuclease H2 complex"/>
    <property type="evidence" value="ECO:0007669"/>
    <property type="project" value="TreeGrafter"/>
</dbReference>
<dbReference type="GO" id="GO:0030145">
    <property type="term" value="F:manganese ion binding"/>
    <property type="evidence" value="ECO:0007669"/>
    <property type="project" value="UniProtKB-UniRule"/>
</dbReference>
<dbReference type="GO" id="GO:0003723">
    <property type="term" value="F:RNA binding"/>
    <property type="evidence" value="ECO:0007669"/>
    <property type="project" value="InterPro"/>
</dbReference>
<dbReference type="GO" id="GO:0004523">
    <property type="term" value="F:RNA-DNA hybrid ribonuclease activity"/>
    <property type="evidence" value="ECO:0007669"/>
    <property type="project" value="UniProtKB-UniRule"/>
</dbReference>
<dbReference type="GO" id="GO:0043137">
    <property type="term" value="P:DNA replication, removal of RNA primer"/>
    <property type="evidence" value="ECO:0007669"/>
    <property type="project" value="TreeGrafter"/>
</dbReference>
<dbReference type="GO" id="GO:0006298">
    <property type="term" value="P:mismatch repair"/>
    <property type="evidence" value="ECO:0007669"/>
    <property type="project" value="TreeGrafter"/>
</dbReference>
<dbReference type="CDD" id="cd07182">
    <property type="entry name" value="RNase_HII_bacteria_HII_like"/>
    <property type="match status" value="1"/>
</dbReference>
<dbReference type="FunFam" id="3.30.420.10:FF:000006">
    <property type="entry name" value="Ribonuclease HII"/>
    <property type="match status" value="1"/>
</dbReference>
<dbReference type="Gene3D" id="3.30.420.10">
    <property type="entry name" value="Ribonuclease H-like superfamily/Ribonuclease H"/>
    <property type="match status" value="1"/>
</dbReference>
<dbReference type="HAMAP" id="MF_00052_B">
    <property type="entry name" value="RNase_HII_B"/>
    <property type="match status" value="1"/>
</dbReference>
<dbReference type="InterPro" id="IPR022898">
    <property type="entry name" value="RNase_HII"/>
</dbReference>
<dbReference type="InterPro" id="IPR001352">
    <property type="entry name" value="RNase_HII/HIII"/>
</dbReference>
<dbReference type="InterPro" id="IPR024567">
    <property type="entry name" value="RNase_HII/HIII_dom"/>
</dbReference>
<dbReference type="InterPro" id="IPR012337">
    <property type="entry name" value="RNaseH-like_sf"/>
</dbReference>
<dbReference type="InterPro" id="IPR036397">
    <property type="entry name" value="RNaseH_sf"/>
</dbReference>
<dbReference type="NCBIfam" id="NF000594">
    <property type="entry name" value="PRK00015.1-1"/>
    <property type="match status" value="1"/>
</dbReference>
<dbReference type="NCBIfam" id="NF000595">
    <property type="entry name" value="PRK00015.1-3"/>
    <property type="match status" value="1"/>
</dbReference>
<dbReference type="NCBIfam" id="NF000596">
    <property type="entry name" value="PRK00015.1-4"/>
    <property type="match status" value="1"/>
</dbReference>
<dbReference type="PANTHER" id="PTHR10954">
    <property type="entry name" value="RIBONUCLEASE H2 SUBUNIT A"/>
    <property type="match status" value="1"/>
</dbReference>
<dbReference type="PANTHER" id="PTHR10954:SF18">
    <property type="entry name" value="RIBONUCLEASE HII"/>
    <property type="match status" value="1"/>
</dbReference>
<dbReference type="Pfam" id="PF01351">
    <property type="entry name" value="RNase_HII"/>
    <property type="match status" value="1"/>
</dbReference>
<dbReference type="SUPFAM" id="SSF53098">
    <property type="entry name" value="Ribonuclease H-like"/>
    <property type="match status" value="1"/>
</dbReference>
<dbReference type="PROSITE" id="PS51975">
    <property type="entry name" value="RNASE_H_2"/>
    <property type="match status" value="1"/>
</dbReference>
<organism>
    <name type="scientific">Shigella flexneri</name>
    <dbReference type="NCBI Taxonomy" id="623"/>
    <lineage>
        <taxon>Bacteria</taxon>
        <taxon>Pseudomonadati</taxon>
        <taxon>Pseudomonadota</taxon>
        <taxon>Gammaproteobacteria</taxon>
        <taxon>Enterobacterales</taxon>
        <taxon>Enterobacteriaceae</taxon>
        <taxon>Shigella</taxon>
    </lineage>
</organism>
<sequence length="198" mass="21552">MIEFVYPHTQLVAGVDEVGRGPLVGAVVTAAVILDPARPIAGLNDSKKLSEKRRLALYEEIKEKALSWSLGRAEPHEIDELNILHATMLAMQRAVAGLHIAPEYVLIDGNRCPKLPMPAMAVVKGDSRVPEISAASILAKVTRDAEMAALDIVFPQYGFAQHKGYPTAFHLEKLAEYGATEHHRRSFGPVKRALGLAS</sequence>